<gene>
    <name evidence="1" type="primary">atpC</name>
    <name type="ordered locus">SERP1708</name>
</gene>
<keyword id="KW-0066">ATP synthesis</keyword>
<keyword id="KW-1003">Cell membrane</keyword>
<keyword id="KW-0139">CF(1)</keyword>
<keyword id="KW-0375">Hydrogen ion transport</keyword>
<keyword id="KW-0406">Ion transport</keyword>
<keyword id="KW-0472">Membrane</keyword>
<keyword id="KW-1185">Reference proteome</keyword>
<keyword id="KW-0813">Transport</keyword>
<comment type="function">
    <text evidence="1">Produces ATP from ADP in the presence of a proton gradient across the membrane.</text>
</comment>
<comment type="subunit">
    <text>F-type ATPases have 2 components, CF(1) - the catalytic core - and CF(0) - the membrane proton channel. CF(1) has five subunits: alpha(3), beta(3), gamma(1), delta(1), epsilon(1). CF(0) has three main subunits: a, b and c.</text>
</comment>
<comment type="subcellular location">
    <subcellularLocation>
        <location evidence="1">Cell membrane</location>
        <topology evidence="1">Peripheral membrane protein</topology>
    </subcellularLocation>
</comment>
<comment type="similarity">
    <text evidence="1">Belongs to the ATPase epsilon chain family.</text>
</comment>
<organism>
    <name type="scientific">Staphylococcus epidermidis (strain ATCC 35984 / DSM 28319 / BCRC 17069 / CCUG 31568 / BM 3577 / RP62A)</name>
    <dbReference type="NCBI Taxonomy" id="176279"/>
    <lineage>
        <taxon>Bacteria</taxon>
        <taxon>Bacillati</taxon>
        <taxon>Bacillota</taxon>
        <taxon>Bacilli</taxon>
        <taxon>Bacillales</taxon>
        <taxon>Staphylococcaceae</taxon>
        <taxon>Staphylococcus</taxon>
    </lineage>
</organism>
<feature type="chain" id="PRO_0000188207" description="ATP synthase epsilon chain">
    <location>
        <begin position="1"/>
        <end position="134"/>
    </location>
</feature>
<feature type="region of interest" description="Disordered" evidence="2">
    <location>
        <begin position="94"/>
        <end position="115"/>
    </location>
</feature>
<feature type="compositionally biased region" description="Basic and acidic residues" evidence="2">
    <location>
        <begin position="94"/>
        <end position="104"/>
    </location>
</feature>
<proteinExistence type="inferred from homology"/>
<name>ATPE_STAEQ</name>
<accession>Q5HMC0</accession>
<dbReference type="EMBL" id="CP000029">
    <property type="protein sequence ID" value="AAW55094.1"/>
    <property type="molecule type" value="Genomic_DNA"/>
</dbReference>
<dbReference type="RefSeq" id="WP_001829924.1">
    <property type="nucleotide sequence ID" value="NC_002976.3"/>
</dbReference>
<dbReference type="SMR" id="Q5HMC0"/>
<dbReference type="STRING" id="176279.SERP1708"/>
<dbReference type="KEGG" id="ser:SERP1708"/>
<dbReference type="eggNOG" id="COG0355">
    <property type="taxonomic scope" value="Bacteria"/>
</dbReference>
<dbReference type="HOGENOM" id="CLU_084338_1_3_9"/>
<dbReference type="Proteomes" id="UP000000531">
    <property type="component" value="Chromosome"/>
</dbReference>
<dbReference type="GO" id="GO:0005886">
    <property type="term" value="C:plasma membrane"/>
    <property type="evidence" value="ECO:0007669"/>
    <property type="project" value="UniProtKB-SubCell"/>
</dbReference>
<dbReference type="GO" id="GO:0045259">
    <property type="term" value="C:proton-transporting ATP synthase complex"/>
    <property type="evidence" value="ECO:0007669"/>
    <property type="project" value="UniProtKB-KW"/>
</dbReference>
<dbReference type="GO" id="GO:0005524">
    <property type="term" value="F:ATP binding"/>
    <property type="evidence" value="ECO:0007669"/>
    <property type="project" value="UniProtKB-UniRule"/>
</dbReference>
<dbReference type="GO" id="GO:0046933">
    <property type="term" value="F:proton-transporting ATP synthase activity, rotational mechanism"/>
    <property type="evidence" value="ECO:0007669"/>
    <property type="project" value="UniProtKB-UniRule"/>
</dbReference>
<dbReference type="CDD" id="cd12152">
    <property type="entry name" value="F1-ATPase_delta"/>
    <property type="match status" value="1"/>
</dbReference>
<dbReference type="FunFam" id="1.20.5.440:FF:000001">
    <property type="entry name" value="ATP synthase epsilon chain"/>
    <property type="match status" value="1"/>
</dbReference>
<dbReference type="Gene3D" id="1.20.5.440">
    <property type="entry name" value="ATP synthase delta/epsilon subunit, C-terminal domain"/>
    <property type="match status" value="1"/>
</dbReference>
<dbReference type="Gene3D" id="2.60.15.10">
    <property type="entry name" value="F0F1 ATP synthase delta/epsilon subunit, N-terminal"/>
    <property type="match status" value="1"/>
</dbReference>
<dbReference type="HAMAP" id="MF_00530">
    <property type="entry name" value="ATP_synth_epsil_bac"/>
    <property type="match status" value="1"/>
</dbReference>
<dbReference type="InterPro" id="IPR036794">
    <property type="entry name" value="ATP_F1_dsu/esu_C_sf"/>
</dbReference>
<dbReference type="InterPro" id="IPR001469">
    <property type="entry name" value="ATP_synth_F1_dsu/esu"/>
</dbReference>
<dbReference type="InterPro" id="IPR020546">
    <property type="entry name" value="ATP_synth_F1_dsu/esu_N"/>
</dbReference>
<dbReference type="InterPro" id="IPR020547">
    <property type="entry name" value="ATP_synth_F1_esu_C"/>
</dbReference>
<dbReference type="InterPro" id="IPR036771">
    <property type="entry name" value="ATPsynth_dsu/esu_N"/>
</dbReference>
<dbReference type="NCBIfam" id="TIGR01216">
    <property type="entry name" value="ATP_synt_epsi"/>
    <property type="match status" value="1"/>
</dbReference>
<dbReference type="NCBIfam" id="NF001846">
    <property type="entry name" value="PRK00571.1-3"/>
    <property type="match status" value="1"/>
</dbReference>
<dbReference type="PANTHER" id="PTHR13822">
    <property type="entry name" value="ATP SYNTHASE DELTA/EPSILON CHAIN"/>
    <property type="match status" value="1"/>
</dbReference>
<dbReference type="PANTHER" id="PTHR13822:SF10">
    <property type="entry name" value="ATP SYNTHASE EPSILON CHAIN, CHLOROPLASTIC"/>
    <property type="match status" value="1"/>
</dbReference>
<dbReference type="Pfam" id="PF00401">
    <property type="entry name" value="ATP-synt_DE"/>
    <property type="match status" value="1"/>
</dbReference>
<dbReference type="Pfam" id="PF02823">
    <property type="entry name" value="ATP-synt_DE_N"/>
    <property type="match status" value="1"/>
</dbReference>
<dbReference type="SUPFAM" id="SSF46604">
    <property type="entry name" value="Epsilon subunit of F1F0-ATP synthase C-terminal domain"/>
    <property type="match status" value="1"/>
</dbReference>
<dbReference type="SUPFAM" id="SSF51344">
    <property type="entry name" value="Epsilon subunit of F1F0-ATP synthase N-terminal domain"/>
    <property type="match status" value="1"/>
</dbReference>
<reference key="1">
    <citation type="journal article" date="2005" name="J. Bacteriol.">
        <title>Insights on evolution of virulence and resistance from the complete genome analysis of an early methicillin-resistant Staphylococcus aureus strain and a biofilm-producing methicillin-resistant Staphylococcus epidermidis strain.</title>
        <authorList>
            <person name="Gill S.R."/>
            <person name="Fouts D.E."/>
            <person name="Archer G.L."/>
            <person name="Mongodin E.F."/>
            <person name="DeBoy R.T."/>
            <person name="Ravel J."/>
            <person name="Paulsen I.T."/>
            <person name="Kolonay J.F."/>
            <person name="Brinkac L.M."/>
            <person name="Beanan M.J."/>
            <person name="Dodson R.J."/>
            <person name="Daugherty S.C."/>
            <person name="Madupu R."/>
            <person name="Angiuoli S.V."/>
            <person name="Durkin A.S."/>
            <person name="Haft D.H."/>
            <person name="Vamathevan J.J."/>
            <person name="Khouri H."/>
            <person name="Utterback T.R."/>
            <person name="Lee C."/>
            <person name="Dimitrov G."/>
            <person name="Jiang L."/>
            <person name="Qin H."/>
            <person name="Weidman J."/>
            <person name="Tran K."/>
            <person name="Kang K.H."/>
            <person name="Hance I.R."/>
            <person name="Nelson K.E."/>
            <person name="Fraser C.M."/>
        </authorList>
    </citation>
    <scope>NUCLEOTIDE SEQUENCE [LARGE SCALE GENOMIC DNA]</scope>
    <source>
        <strain>ATCC 35984 / DSM 28319 / BCRC 17069 / CCUG 31568 / BM 3577 / RP62A</strain>
    </source>
</reference>
<sequence length="134" mass="14923">MNTLRLNIVTPNGSVYEREDVEMAVLQTTAGEMGIMYGHIPTVAALKTGHVKVNFHNGNEFIAVSDGFIEARQHQLSIIVQTAEPASEIDVERAKLAKSRAESHLEEDDDNTDINRAKRALERANNRLRVAELQ</sequence>
<protein>
    <recommendedName>
        <fullName evidence="1">ATP synthase epsilon chain</fullName>
    </recommendedName>
    <alternativeName>
        <fullName evidence="1">ATP synthase F1 sector epsilon subunit</fullName>
    </alternativeName>
    <alternativeName>
        <fullName evidence="1">F-ATPase epsilon subunit</fullName>
    </alternativeName>
</protein>
<evidence type="ECO:0000255" key="1">
    <source>
        <dbReference type="HAMAP-Rule" id="MF_00530"/>
    </source>
</evidence>
<evidence type="ECO:0000256" key="2">
    <source>
        <dbReference type="SAM" id="MobiDB-lite"/>
    </source>
</evidence>